<protein>
    <recommendedName>
        <fullName>Omega-theraphotoxin-Hhn1f 4</fullName>
        <shortName>Omega-TRTX-Hhn1f</shortName>
    </recommendedName>
    <alternativeName>
        <fullName>Hainantoxin-IX.4</fullName>
        <shortName>HNTX-IX.4</shortName>
    </alternativeName>
    <alternativeName>
        <fullName>Peptide F1-29.54</fullName>
    </alternativeName>
</protein>
<evidence type="ECO:0000250" key="1"/>
<evidence type="ECO:0000255" key="2"/>
<evidence type="ECO:0000269" key="3">
    <source>
    </source>
</evidence>
<evidence type="ECO:0000305" key="4"/>
<name>H9A04_CYRHA</name>
<accession>D2Y2F0</accession>
<reference key="1">
    <citation type="journal article" date="2010" name="J. Proteome Res.">
        <title>Molecular diversification of peptide toxins from the tarantula Haplopelma hainanum (Ornithoctonus hainana) venom based on transcriptomic, peptidomic, and genomic analyses.</title>
        <authorList>
            <person name="Tang X."/>
            <person name="Zhang Y."/>
            <person name="Hu W."/>
            <person name="Xu D."/>
            <person name="Tao H."/>
            <person name="Yang X."/>
            <person name="Li Y."/>
            <person name="Jiang L."/>
            <person name="Liang S."/>
        </authorList>
    </citation>
    <scope>NUCLEOTIDE SEQUENCE [LARGE SCALE MRNA]</scope>
    <scope>PROTEIN SEQUENCE OF 51-85</scope>
    <scope>IDENTIFICATION BY MASS SPECTROMETRY</scope>
    <source>
        <tissue>Venom</tissue>
        <tissue>Venom gland</tissue>
    </source>
</reference>
<organism>
    <name type="scientific">Cyriopagopus hainanus</name>
    <name type="common">Chinese bird spider</name>
    <name type="synonym">Haplopelma hainanum</name>
    <dbReference type="NCBI Taxonomy" id="209901"/>
    <lineage>
        <taxon>Eukaryota</taxon>
        <taxon>Metazoa</taxon>
        <taxon>Ecdysozoa</taxon>
        <taxon>Arthropoda</taxon>
        <taxon>Chelicerata</taxon>
        <taxon>Arachnida</taxon>
        <taxon>Araneae</taxon>
        <taxon>Mygalomorphae</taxon>
        <taxon>Theraphosidae</taxon>
        <taxon>Haplopelma</taxon>
    </lineage>
</organism>
<feature type="signal peptide" evidence="2">
    <location>
        <begin position="1"/>
        <end position="21"/>
    </location>
</feature>
<feature type="propeptide" id="PRO_0000400655" evidence="3">
    <location>
        <begin position="22"/>
        <end position="50"/>
    </location>
</feature>
<feature type="peptide" id="PRO_0000400656" description="Omega-theraphotoxin-Hhn1f 4">
    <location>
        <begin position="51"/>
        <end position="86"/>
    </location>
</feature>
<feature type="disulfide bond" evidence="1">
    <location>
        <begin position="52"/>
        <end position="66"/>
    </location>
</feature>
<feature type="disulfide bond" evidence="1">
    <location>
        <begin position="59"/>
        <end position="71"/>
    </location>
</feature>
<feature type="disulfide bond" evidence="1">
    <location>
        <begin position="65"/>
        <end position="78"/>
    </location>
</feature>
<proteinExistence type="evidence at protein level"/>
<sequence length="86" mass="9601">MKSIVFVALFGLALLAVVCSASEDAHKELLKEVVRAMVVDKTDAVQAGERECRWYLGGCSQDGDCCKHLQCHSNYEWCIWDGTFSK</sequence>
<comment type="function">
    <text evidence="1">Ion channel inhibitor.</text>
</comment>
<comment type="subcellular location">
    <subcellularLocation>
        <location>Secreted</location>
    </subcellularLocation>
</comment>
<comment type="tissue specificity">
    <text>Expressed by the venom gland.</text>
</comment>
<comment type="domain">
    <text evidence="1">The presence of a 'disulfide through disulfide knot' structurally defines this protein as a knottin.</text>
</comment>
<comment type="similarity">
    <text evidence="4">Belongs to the neurotoxin 10 (Hwtx-1) family. 17 (Hntx-9) subfamily.</text>
</comment>
<dbReference type="EMBL" id="GU293027">
    <property type="protein sequence ID" value="ADB56843.1"/>
    <property type="molecule type" value="mRNA"/>
</dbReference>
<dbReference type="SMR" id="D2Y2F0"/>
<dbReference type="ArachnoServer" id="AS001945">
    <property type="toxin name" value="omega-theraphotoxin-Hhn1f"/>
</dbReference>
<dbReference type="GO" id="GO:0005576">
    <property type="term" value="C:extracellular region"/>
    <property type="evidence" value="ECO:0007669"/>
    <property type="project" value="UniProtKB-SubCell"/>
</dbReference>
<dbReference type="GO" id="GO:0008200">
    <property type="term" value="F:ion channel inhibitor activity"/>
    <property type="evidence" value="ECO:0007669"/>
    <property type="project" value="InterPro"/>
</dbReference>
<dbReference type="GO" id="GO:0090729">
    <property type="term" value="F:toxin activity"/>
    <property type="evidence" value="ECO:0007669"/>
    <property type="project" value="UniProtKB-KW"/>
</dbReference>
<dbReference type="InterPro" id="IPR011696">
    <property type="entry name" value="Huwentoxin-1"/>
</dbReference>
<dbReference type="InterPro" id="IPR013140">
    <property type="entry name" value="Huwentoxin_CS1"/>
</dbReference>
<dbReference type="Pfam" id="PF07740">
    <property type="entry name" value="Toxin_12"/>
    <property type="match status" value="1"/>
</dbReference>
<dbReference type="SUPFAM" id="SSF57059">
    <property type="entry name" value="omega toxin-like"/>
    <property type="match status" value="1"/>
</dbReference>
<dbReference type="PROSITE" id="PS60021">
    <property type="entry name" value="HWTX_1"/>
    <property type="match status" value="1"/>
</dbReference>
<keyword id="KW-0903">Direct protein sequencing</keyword>
<keyword id="KW-1015">Disulfide bond</keyword>
<keyword id="KW-0872">Ion channel impairing toxin</keyword>
<keyword id="KW-0960">Knottin</keyword>
<keyword id="KW-0964">Secreted</keyword>
<keyword id="KW-0732">Signal</keyword>
<keyword id="KW-0800">Toxin</keyword>